<feature type="chain" id="PRO_1000198466" description="Probable transaldolase">
    <location>
        <begin position="1"/>
        <end position="217"/>
    </location>
</feature>
<feature type="active site" description="Schiff-base intermediate with substrate" evidence="1">
    <location>
        <position position="85"/>
    </location>
</feature>
<reference key="1">
    <citation type="journal article" date="2009" name="PLoS ONE">
        <title>Genome sequence of the pathogenic intestinal spirochete Brachyspira hyodysenteriae reveals adaptations to its lifestyle in the porcine large intestine.</title>
        <authorList>
            <person name="Bellgard M.I."/>
            <person name="Wanchanthuek P."/>
            <person name="La T."/>
            <person name="Ryan K."/>
            <person name="Moolhuijzen P."/>
            <person name="Albertyn Z."/>
            <person name="Shaban B."/>
            <person name="Motro Y."/>
            <person name="Dunn D.S."/>
            <person name="Schibeci D."/>
            <person name="Hunter A."/>
            <person name="Barrero R."/>
            <person name="Phillips N.D."/>
            <person name="Hampson D.J."/>
        </authorList>
    </citation>
    <scope>NUCLEOTIDE SEQUENCE [LARGE SCALE GENOMIC DNA]</scope>
    <source>
        <strain>ATCC 49526 / WA1</strain>
    </source>
</reference>
<protein>
    <recommendedName>
        <fullName evidence="1">Probable transaldolase</fullName>
        <ecNumber evidence="1">2.2.1.2</ecNumber>
    </recommendedName>
</protein>
<keyword id="KW-0963">Cytoplasm</keyword>
<keyword id="KW-0570">Pentose shunt</keyword>
<keyword id="KW-0704">Schiff base</keyword>
<keyword id="KW-0808">Transferase</keyword>
<comment type="function">
    <text evidence="1">Transaldolase is important for the balance of metabolites in the pentose-phosphate pathway.</text>
</comment>
<comment type="catalytic activity">
    <reaction evidence="1">
        <text>D-sedoheptulose 7-phosphate + D-glyceraldehyde 3-phosphate = D-erythrose 4-phosphate + beta-D-fructose 6-phosphate</text>
        <dbReference type="Rhea" id="RHEA:17053"/>
        <dbReference type="ChEBI" id="CHEBI:16897"/>
        <dbReference type="ChEBI" id="CHEBI:57483"/>
        <dbReference type="ChEBI" id="CHEBI:57634"/>
        <dbReference type="ChEBI" id="CHEBI:59776"/>
        <dbReference type="EC" id="2.2.1.2"/>
    </reaction>
</comment>
<comment type="pathway">
    <text evidence="1">Carbohydrate degradation; pentose phosphate pathway; D-glyceraldehyde 3-phosphate and beta-D-fructose 6-phosphate from D-ribose 5-phosphate and D-xylulose 5-phosphate (non-oxidative stage): step 2/3.</text>
</comment>
<comment type="subcellular location">
    <subcellularLocation>
        <location evidence="1">Cytoplasm</location>
    </subcellularLocation>
</comment>
<comment type="similarity">
    <text evidence="1">Belongs to the transaldolase family. Type 3B subfamily.</text>
</comment>
<gene>
    <name evidence="1" type="primary">tal</name>
    <name type="ordered locus">BHWA1_01968</name>
</gene>
<accession>C0QVC8</accession>
<evidence type="ECO:0000255" key="1">
    <source>
        <dbReference type="HAMAP-Rule" id="MF_00494"/>
    </source>
</evidence>
<dbReference type="EC" id="2.2.1.2" evidence="1"/>
<dbReference type="EMBL" id="CP001357">
    <property type="protein sequence ID" value="ACN84429.1"/>
    <property type="molecule type" value="Genomic_DNA"/>
</dbReference>
<dbReference type="RefSeq" id="WP_012671468.1">
    <property type="nucleotide sequence ID" value="NC_012225.1"/>
</dbReference>
<dbReference type="SMR" id="C0QVC8"/>
<dbReference type="STRING" id="565034.BHWA1_01968"/>
<dbReference type="GeneID" id="63963120"/>
<dbReference type="KEGG" id="bhy:BHWA1_01968"/>
<dbReference type="eggNOG" id="COG0176">
    <property type="taxonomic scope" value="Bacteria"/>
</dbReference>
<dbReference type="HOGENOM" id="CLU_079764_0_0_12"/>
<dbReference type="UniPathway" id="UPA00115">
    <property type="reaction ID" value="UER00414"/>
</dbReference>
<dbReference type="Proteomes" id="UP000001803">
    <property type="component" value="Chromosome"/>
</dbReference>
<dbReference type="GO" id="GO:0005737">
    <property type="term" value="C:cytoplasm"/>
    <property type="evidence" value="ECO:0007669"/>
    <property type="project" value="UniProtKB-SubCell"/>
</dbReference>
<dbReference type="GO" id="GO:0016832">
    <property type="term" value="F:aldehyde-lyase activity"/>
    <property type="evidence" value="ECO:0007669"/>
    <property type="project" value="InterPro"/>
</dbReference>
<dbReference type="GO" id="GO:0004801">
    <property type="term" value="F:transaldolase activity"/>
    <property type="evidence" value="ECO:0007669"/>
    <property type="project" value="UniProtKB-UniRule"/>
</dbReference>
<dbReference type="GO" id="GO:0005975">
    <property type="term" value="P:carbohydrate metabolic process"/>
    <property type="evidence" value="ECO:0007669"/>
    <property type="project" value="InterPro"/>
</dbReference>
<dbReference type="GO" id="GO:0006098">
    <property type="term" value="P:pentose-phosphate shunt"/>
    <property type="evidence" value="ECO:0007669"/>
    <property type="project" value="UniProtKB-UniRule"/>
</dbReference>
<dbReference type="CDD" id="cd00956">
    <property type="entry name" value="Transaldolase_FSA"/>
    <property type="match status" value="1"/>
</dbReference>
<dbReference type="FunFam" id="3.20.20.70:FF:000018">
    <property type="entry name" value="Probable transaldolase"/>
    <property type="match status" value="1"/>
</dbReference>
<dbReference type="Gene3D" id="3.20.20.70">
    <property type="entry name" value="Aldolase class I"/>
    <property type="match status" value="1"/>
</dbReference>
<dbReference type="HAMAP" id="MF_00494">
    <property type="entry name" value="Transaldolase_3b"/>
    <property type="match status" value="1"/>
</dbReference>
<dbReference type="InterPro" id="IPR013785">
    <property type="entry name" value="Aldolase_TIM"/>
</dbReference>
<dbReference type="InterPro" id="IPR001585">
    <property type="entry name" value="TAL/FSA"/>
</dbReference>
<dbReference type="InterPro" id="IPR022999">
    <property type="entry name" value="Transaldolase_3B"/>
</dbReference>
<dbReference type="InterPro" id="IPR004731">
    <property type="entry name" value="Transaldolase_3B/F6P_aldolase"/>
</dbReference>
<dbReference type="InterPro" id="IPR018225">
    <property type="entry name" value="Transaldolase_AS"/>
</dbReference>
<dbReference type="InterPro" id="IPR033919">
    <property type="entry name" value="TSA/FSA_arc/bac"/>
</dbReference>
<dbReference type="NCBIfam" id="TIGR00875">
    <property type="entry name" value="fsa_talC_mipB"/>
    <property type="match status" value="1"/>
</dbReference>
<dbReference type="PANTHER" id="PTHR10683">
    <property type="entry name" value="TRANSALDOLASE"/>
    <property type="match status" value="1"/>
</dbReference>
<dbReference type="PANTHER" id="PTHR10683:SF36">
    <property type="entry name" value="TRANSALDOLASE"/>
    <property type="match status" value="1"/>
</dbReference>
<dbReference type="Pfam" id="PF00923">
    <property type="entry name" value="TAL_FSA"/>
    <property type="match status" value="1"/>
</dbReference>
<dbReference type="SUPFAM" id="SSF51569">
    <property type="entry name" value="Aldolase"/>
    <property type="match status" value="1"/>
</dbReference>
<dbReference type="PROSITE" id="PS01054">
    <property type="entry name" value="TRANSALDOLASE_1"/>
    <property type="match status" value="1"/>
</dbReference>
<dbReference type="PROSITE" id="PS00958">
    <property type="entry name" value="TRANSALDOLASE_2"/>
    <property type="match status" value="1"/>
</dbReference>
<name>TAL_BRAHW</name>
<sequence>MKFFIDTANVDEIKKANDMGVICGVTTNPSLIAKEGRDFKKTIEEITTIVDGPISGEVKATTVKAEDMIAEAREIAKIHKNMVVKIPMTVEGLKAVKVLSKEGIKTNVTLIFSANQALLAARAGATYVSPFIGRLDDISMDGLELIRTISEIFATHAIETEIISASVRHPIHVTECALAGADIATVPYSVIEQMTKHPLTDQGIEKFKKDYEAVFGK</sequence>
<proteinExistence type="inferred from homology"/>
<organism>
    <name type="scientific">Brachyspira hyodysenteriae (strain ATCC 49526 / WA1)</name>
    <dbReference type="NCBI Taxonomy" id="565034"/>
    <lineage>
        <taxon>Bacteria</taxon>
        <taxon>Pseudomonadati</taxon>
        <taxon>Spirochaetota</taxon>
        <taxon>Spirochaetia</taxon>
        <taxon>Brachyspirales</taxon>
        <taxon>Brachyspiraceae</taxon>
        <taxon>Brachyspira</taxon>
    </lineage>
</organism>